<sequence>MSIFKMMLIYFAILWVVNAAQLLDIDPQGVIPGAYIVVMKDRVSSLEFSSHVRWLKRTHRRNLAKRAIPFTEGLSATWDIAGWQAYSGSFDEDTVQEILNHENVEFVEPNKEMQVASTIKQGNVTWGLSRISHKENSSHDYVSTYGEGENITFYGIDSGIDINQADFTGRARWGINLADHVDTDCNGHGTHTAGTVAGQKFGILKKASIVSIKILDCYGYGDITRYINGLNWAINDAKERGLLGKSVMNISLKTGRSRAVNEATVRAQEAGIFIAVAAGNQATSAEFYSPGSAPEVCTVGASTRNDTKAIFSNYGELVDLFAPREYIRSTLPHNLTGLMSGTSMATPHVCGVGGLIMATEGLAPEKVCDRLKELANPTIQNPGFNTTNKLLYNGSGA</sequence>
<proteinExistence type="inferred from homology"/>
<keyword id="KW-0325">Glycoprotein</keyword>
<keyword id="KW-0378">Hydrolase</keyword>
<keyword id="KW-0645">Protease</keyword>
<keyword id="KW-0964">Secreted</keyword>
<keyword id="KW-0720">Serine protease</keyword>
<keyword id="KW-0732">Signal</keyword>
<keyword id="KW-0843">Virulence</keyword>
<keyword id="KW-0865">Zymogen</keyword>
<accession>D4D1U5</accession>
<gene>
    <name type="primary">SUB12</name>
    <name type="ORF">TRV_01047</name>
</gene>
<name>SUB12_TRIVH</name>
<feature type="signal peptide" evidence="2">
    <location>
        <begin position="1"/>
        <end position="19"/>
    </location>
</feature>
<feature type="propeptide" id="PRO_0000406410" evidence="1">
    <location>
        <begin position="20"/>
        <end position="116"/>
    </location>
</feature>
<feature type="chain" id="PRO_0000406411" description="Subtilisin-like protease 12">
    <location>
        <begin position="117"/>
        <end position="397"/>
    </location>
</feature>
<feature type="domain" description="Inhibitor I9" evidence="2">
    <location>
        <begin position="35"/>
        <end position="115"/>
    </location>
</feature>
<feature type="domain" description="Peptidase S8" evidence="3">
    <location>
        <begin position="125"/>
        <end position="397"/>
    </location>
</feature>
<feature type="active site" description="Charge relay system" evidence="3">
    <location>
        <position position="157"/>
    </location>
</feature>
<feature type="active site" description="Charge relay system" evidence="3">
    <location>
        <position position="188"/>
    </location>
</feature>
<feature type="active site" description="Charge relay system" evidence="3">
    <location>
        <position position="343"/>
    </location>
</feature>
<feature type="glycosylation site" description="N-linked (GlcNAc...) asparagine" evidence="2">
    <location>
        <position position="123"/>
    </location>
</feature>
<feature type="glycosylation site" description="N-linked (GlcNAc...) asparagine" evidence="2">
    <location>
        <position position="136"/>
    </location>
</feature>
<feature type="glycosylation site" description="N-linked (GlcNAc...) asparagine" evidence="2">
    <location>
        <position position="150"/>
    </location>
</feature>
<feature type="glycosylation site" description="N-linked (GlcNAc...) asparagine" evidence="2">
    <location>
        <position position="249"/>
    </location>
</feature>
<feature type="glycosylation site" description="N-linked (GlcNAc...) asparagine" evidence="2">
    <location>
        <position position="305"/>
    </location>
</feature>
<feature type="glycosylation site" description="N-linked (GlcNAc...) asparagine" evidence="2">
    <location>
        <position position="334"/>
    </location>
</feature>
<feature type="glycosylation site" description="N-linked (GlcNAc...) asparagine" evidence="2">
    <location>
        <position position="385"/>
    </location>
</feature>
<feature type="glycosylation site" description="N-linked (GlcNAc...) asparagine" evidence="2">
    <location>
        <position position="393"/>
    </location>
</feature>
<comment type="function">
    <text evidence="1">Secreted subtilisin-like serine protease with keratinolytic activity that contributes to pathogenicity.</text>
</comment>
<comment type="subcellular location">
    <subcellularLocation>
        <location evidence="1">Secreted</location>
    </subcellularLocation>
</comment>
<comment type="similarity">
    <text evidence="4">Belongs to the peptidase S8 family.</text>
</comment>
<protein>
    <recommendedName>
        <fullName>Subtilisin-like protease 12</fullName>
        <ecNumber>3.4.21.-</ecNumber>
    </recommendedName>
</protein>
<evidence type="ECO:0000250" key="1"/>
<evidence type="ECO:0000255" key="2"/>
<evidence type="ECO:0000255" key="3">
    <source>
        <dbReference type="PROSITE-ProRule" id="PRU01240"/>
    </source>
</evidence>
<evidence type="ECO:0000305" key="4"/>
<reference key="1">
    <citation type="journal article" date="2011" name="Genome Biol.">
        <title>Comparative and functional genomics provide insights into the pathogenicity of dermatophytic fungi.</title>
        <authorList>
            <person name="Burmester A."/>
            <person name="Shelest E."/>
            <person name="Gloeckner G."/>
            <person name="Heddergott C."/>
            <person name="Schindler S."/>
            <person name="Staib P."/>
            <person name="Heidel A."/>
            <person name="Felder M."/>
            <person name="Petzold A."/>
            <person name="Szafranski K."/>
            <person name="Feuermann M."/>
            <person name="Pedruzzi I."/>
            <person name="Priebe S."/>
            <person name="Groth M."/>
            <person name="Winkler R."/>
            <person name="Li W."/>
            <person name="Kniemeyer O."/>
            <person name="Schroeckh V."/>
            <person name="Hertweck C."/>
            <person name="Hube B."/>
            <person name="White T.C."/>
            <person name="Platzer M."/>
            <person name="Guthke R."/>
            <person name="Heitman J."/>
            <person name="Woestemeyer J."/>
            <person name="Zipfel P.F."/>
            <person name="Monod M."/>
            <person name="Brakhage A.A."/>
        </authorList>
    </citation>
    <scope>NUCLEOTIDE SEQUENCE [LARGE SCALE GENOMIC DNA]</scope>
    <source>
        <strain>HKI 0517</strain>
    </source>
</reference>
<organism>
    <name type="scientific">Trichophyton verrucosum (strain HKI 0517)</name>
    <dbReference type="NCBI Taxonomy" id="663202"/>
    <lineage>
        <taxon>Eukaryota</taxon>
        <taxon>Fungi</taxon>
        <taxon>Dikarya</taxon>
        <taxon>Ascomycota</taxon>
        <taxon>Pezizomycotina</taxon>
        <taxon>Eurotiomycetes</taxon>
        <taxon>Eurotiomycetidae</taxon>
        <taxon>Onygenales</taxon>
        <taxon>Arthrodermataceae</taxon>
        <taxon>Trichophyton</taxon>
    </lineage>
</organism>
<dbReference type="EC" id="3.4.21.-"/>
<dbReference type="EMBL" id="ACYE01000060">
    <property type="protein sequence ID" value="EFE44154.1"/>
    <property type="molecule type" value="Genomic_DNA"/>
</dbReference>
<dbReference type="RefSeq" id="XP_003024765.1">
    <property type="nucleotide sequence ID" value="XM_003024719.1"/>
</dbReference>
<dbReference type="SMR" id="D4D1U5"/>
<dbReference type="GlyCosmos" id="D4D1U5">
    <property type="glycosylation" value="8 sites, No reported glycans"/>
</dbReference>
<dbReference type="GeneID" id="9580255"/>
<dbReference type="KEGG" id="tve:TRV_01047"/>
<dbReference type="HOGENOM" id="CLU_011263_1_3_1"/>
<dbReference type="OrthoDB" id="2171at34384"/>
<dbReference type="Proteomes" id="UP000008383">
    <property type="component" value="Unassembled WGS sequence"/>
</dbReference>
<dbReference type="GO" id="GO:0005576">
    <property type="term" value="C:extracellular region"/>
    <property type="evidence" value="ECO:0007669"/>
    <property type="project" value="UniProtKB-SubCell"/>
</dbReference>
<dbReference type="GO" id="GO:0004252">
    <property type="term" value="F:serine-type endopeptidase activity"/>
    <property type="evidence" value="ECO:0007669"/>
    <property type="project" value="InterPro"/>
</dbReference>
<dbReference type="GO" id="GO:0006508">
    <property type="term" value="P:proteolysis"/>
    <property type="evidence" value="ECO:0007669"/>
    <property type="project" value="UniProtKB-KW"/>
</dbReference>
<dbReference type="CDD" id="cd04077">
    <property type="entry name" value="Peptidases_S8_PCSK9_ProteinaseK_like"/>
    <property type="match status" value="1"/>
</dbReference>
<dbReference type="FunFam" id="3.40.50.200:FF:000014">
    <property type="entry name" value="Proteinase K"/>
    <property type="match status" value="1"/>
</dbReference>
<dbReference type="Gene3D" id="3.30.70.80">
    <property type="entry name" value="Peptidase S8 propeptide/proteinase inhibitor I9"/>
    <property type="match status" value="1"/>
</dbReference>
<dbReference type="Gene3D" id="3.40.50.200">
    <property type="entry name" value="Peptidase S8/S53 domain"/>
    <property type="match status" value="1"/>
</dbReference>
<dbReference type="InterPro" id="IPR034193">
    <property type="entry name" value="PCSK9_ProteinaseK-like"/>
</dbReference>
<dbReference type="InterPro" id="IPR000209">
    <property type="entry name" value="Peptidase_S8/S53_dom"/>
</dbReference>
<dbReference type="InterPro" id="IPR036852">
    <property type="entry name" value="Peptidase_S8/S53_dom_sf"/>
</dbReference>
<dbReference type="InterPro" id="IPR023828">
    <property type="entry name" value="Peptidase_S8_Ser-AS"/>
</dbReference>
<dbReference type="InterPro" id="IPR050131">
    <property type="entry name" value="Peptidase_S8_subtilisin-like"/>
</dbReference>
<dbReference type="InterPro" id="IPR015500">
    <property type="entry name" value="Peptidase_S8_subtilisin-rel"/>
</dbReference>
<dbReference type="InterPro" id="IPR010259">
    <property type="entry name" value="S8pro/Inhibitor_I9"/>
</dbReference>
<dbReference type="InterPro" id="IPR037045">
    <property type="entry name" value="S8pro/Inhibitor_I9_sf"/>
</dbReference>
<dbReference type="PANTHER" id="PTHR43806:SF11">
    <property type="entry name" value="CEREVISIN-RELATED"/>
    <property type="match status" value="1"/>
</dbReference>
<dbReference type="PANTHER" id="PTHR43806">
    <property type="entry name" value="PEPTIDASE S8"/>
    <property type="match status" value="1"/>
</dbReference>
<dbReference type="Pfam" id="PF05922">
    <property type="entry name" value="Inhibitor_I9"/>
    <property type="match status" value="1"/>
</dbReference>
<dbReference type="Pfam" id="PF00082">
    <property type="entry name" value="Peptidase_S8"/>
    <property type="match status" value="1"/>
</dbReference>
<dbReference type="PRINTS" id="PR00723">
    <property type="entry name" value="SUBTILISIN"/>
</dbReference>
<dbReference type="SUPFAM" id="SSF54897">
    <property type="entry name" value="Protease propeptides/inhibitors"/>
    <property type="match status" value="1"/>
</dbReference>
<dbReference type="SUPFAM" id="SSF52743">
    <property type="entry name" value="Subtilisin-like"/>
    <property type="match status" value="1"/>
</dbReference>
<dbReference type="PROSITE" id="PS51892">
    <property type="entry name" value="SUBTILASE"/>
    <property type="match status" value="1"/>
</dbReference>
<dbReference type="PROSITE" id="PS00138">
    <property type="entry name" value="SUBTILASE_SER"/>
    <property type="match status" value="1"/>
</dbReference>